<evidence type="ECO:0000255" key="1">
    <source>
        <dbReference type="HAMAP-Rule" id="MF_00020"/>
    </source>
</evidence>
<gene>
    <name evidence="1" type="primary">ackA</name>
    <name type="ordered locus">Moth_0940</name>
</gene>
<organism>
    <name type="scientific">Moorella thermoacetica (strain ATCC 39073 / JCM 9320)</name>
    <dbReference type="NCBI Taxonomy" id="264732"/>
    <lineage>
        <taxon>Bacteria</taxon>
        <taxon>Bacillati</taxon>
        <taxon>Bacillota</taxon>
        <taxon>Clostridia</taxon>
        <taxon>Moorellales</taxon>
        <taxon>Moorellaceae</taxon>
        <taxon>Moorella</taxon>
    </lineage>
</organism>
<keyword id="KW-0067">ATP-binding</keyword>
<keyword id="KW-0963">Cytoplasm</keyword>
<keyword id="KW-0418">Kinase</keyword>
<keyword id="KW-0460">Magnesium</keyword>
<keyword id="KW-0479">Metal-binding</keyword>
<keyword id="KW-0547">Nucleotide-binding</keyword>
<keyword id="KW-0808">Transferase</keyword>
<name>ACKA_MOOTA</name>
<accession>Q2RJY3</accession>
<feature type="chain" id="PRO_1000002241" description="Acetate kinase">
    <location>
        <begin position="1"/>
        <end position="397"/>
    </location>
</feature>
<feature type="active site" description="Proton donor/acceptor" evidence="1">
    <location>
        <position position="147"/>
    </location>
</feature>
<feature type="binding site" evidence="1">
    <location>
        <position position="7"/>
    </location>
    <ligand>
        <name>Mg(2+)</name>
        <dbReference type="ChEBI" id="CHEBI:18420"/>
    </ligand>
</feature>
<feature type="binding site" evidence="1">
    <location>
        <position position="14"/>
    </location>
    <ligand>
        <name>ATP</name>
        <dbReference type="ChEBI" id="CHEBI:30616"/>
    </ligand>
</feature>
<feature type="binding site" evidence="1">
    <location>
        <position position="91"/>
    </location>
    <ligand>
        <name>substrate</name>
    </ligand>
</feature>
<feature type="binding site" evidence="1">
    <location>
        <begin position="207"/>
        <end position="211"/>
    </location>
    <ligand>
        <name>ATP</name>
        <dbReference type="ChEBI" id="CHEBI:30616"/>
    </ligand>
</feature>
<feature type="binding site" evidence="1">
    <location>
        <begin position="282"/>
        <end position="284"/>
    </location>
    <ligand>
        <name>ATP</name>
        <dbReference type="ChEBI" id="CHEBI:30616"/>
    </ligand>
</feature>
<feature type="binding site" evidence="1">
    <location>
        <begin position="330"/>
        <end position="334"/>
    </location>
    <ligand>
        <name>ATP</name>
        <dbReference type="ChEBI" id="CHEBI:30616"/>
    </ligand>
</feature>
<feature type="binding site" evidence="1">
    <location>
        <position position="383"/>
    </location>
    <ligand>
        <name>Mg(2+)</name>
        <dbReference type="ChEBI" id="CHEBI:18420"/>
    </ligand>
</feature>
<feature type="site" description="Transition state stabilizer" evidence="1">
    <location>
        <position position="179"/>
    </location>
</feature>
<feature type="site" description="Transition state stabilizer" evidence="1">
    <location>
        <position position="240"/>
    </location>
</feature>
<dbReference type="EC" id="2.7.2.1" evidence="1"/>
<dbReference type="EMBL" id="CP000232">
    <property type="protein sequence ID" value="ABC19256.1"/>
    <property type="molecule type" value="Genomic_DNA"/>
</dbReference>
<dbReference type="RefSeq" id="YP_429799.1">
    <property type="nucleotide sequence ID" value="NC_007644.1"/>
</dbReference>
<dbReference type="SMR" id="Q2RJY3"/>
<dbReference type="STRING" id="264732.Moth_0940"/>
<dbReference type="EnsemblBacteria" id="ABC19256">
    <property type="protein sequence ID" value="ABC19256"/>
    <property type="gene ID" value="Moth_0940"/>
</dbReference>
<dbReference type="KEGG" id="mta:Moth_0940"/>
<dbReference type="PATRIC" id="fig|264732.11.peg.1012"/>
<dbReference type="eggNOG" id="COG0282">
    <property type="taxonomic scope" value="Bacteria"/>
</dbReference>
<dbReference type="HOGENOM" id="CLU_020352_0_1_9"/>
<dbReference type="OrthoDB" id="9802453at2"/>
<dbReference type="UniPathway" id="UPA00340">
    <property type="reaction ID" value="UER00458"/>
</dbReference>
<dbReference type="GO" id="GO:0005737">
    <property type="term" value="C:cytoplasm"/>
    <property type="evidence" value="ECO:0007669"/>
    <property type="project" value="UniProtKB-SubCell"/>
</dbReference>
<dbReference type="GO" id="GO:0008776">
    <property type="term" value="F:acetate kinase activity"/>
    <property type="evidence" value="ECO:0007669"/>
    <property type="project" value="UniProtKB-UniRule"/>
</dbReference>
<dbReference type="GO" id="GO:0005524">
    <property type="term" value="F:ATP binding"/>
    <property type="evidence" value="ECO:0007669"/>
    <property type="project" value="UniProtKB-KW"/>
</dbReference>
<dbReference type="GO" id="GO:0000287">
    <property type="term" value="F:magnesium ion binding"/>
    <property type="evidence" value="ECO:0007669"/>
    <property type="project" value="UniProtKB-UniRule"/>
</dbReference>
<dbReference type="GO" id="GO:0006083">
    <property type="term" value="P:acetate metabolic process"/>
    <property type="evidence" value="ECO:0007669"/>
    <property type="project" value="TreeGrafter"/>
</dbReference>
<dbReference type="GO" id="GO:0006085">
    <property type="term" value="P:acetyl-CoA biosynthetic process"/>
    <property type="evidence" value="ECO:0007669"/>
    <property type="project" value="UniProtKB-UniRule"/>
</dbReference>
<dbReference type="CDD" id="cd24010">
    <property type="entry name" value="ASKHA_NBD_AcK_PK"/>
    <property type="match status" value="1"/>
</dbReference>
<dbReference type="Gene3D" id="3.30.420.40">
    <property type="match status" value="2"/>
</dbReference>
<dbReference type="HAMAP" id="MF_00020">
    <property type="entry name" value="Acetate_kinase"/>
    <property type="match status" value="1"/>
</dbReference>
<dbReference type="InterPro" id="IPR004372">
    <property type="entry name" value="Ac/propionate_kinase"/>
</dbReference>
<dbReference type="InterPro" id="IPR000890">
    <property type="entry name" value="Aliphatic_acid_kin_short-chain"/>
</dbReference>
<dbReference type="InterPro" id="IPR023865">
    <property type="entry name" value="Aliphatic_acid_kinase_CS"/>
</dbReference>
<dbReference type="InterPro" id="IPR043129">
    <property type="entry name" value="ATPase_NBD"/>
</dbReference>
<dbReference type="NCBIfam" id="TIGR00016">
    <property type="entry name" value="ackA"/>
    <property type="match status" value="1"/>
</dbReference>
<dbReference type="PANTHER" id="PTHR21060">
    <property type="entry name" value="ACETATE KINASE"/>
    <property type="match status" value="1"/>
</dbReference>
<dbReference type="PANTHER" id="PTHR21060:SF15">
    <property type="entry name" value="ACETATE KINASE-RELATED"/>
    <property type="match status" value="1"/>
</dbReference>
<dbReference type="Pfam" id="PF00871">
    <property type="entry name" value="Acetate_kinase"/>
    <property type="match status" value="1"/>
</dbReference>
<dbReference type="PIRSF" id="PIRSF000722">
    <property type="entry name" value="Acetate_prop_kin"/>
    <property type="match status" value="1"/>
</dbReference>
<dbReference type="PRINTS" id="PR00471">
    <property type="entry name" value="ACETATEKNASE"/>
</dbReference>
<dbReference type="SUPFAM" id="SSF53067">
    <property type="entry name" value="Actin-like ATPase domain"/>
    <property type="match status" value="2"/>
</dbReference>
<dbReference type="PROSITE" id="PS01075">
    <property type="entry name" value="ACETATE_KINASE_1"/>
    <property type="match status" value="1"/>
</dbReference>
<proteinExistence type="inferred from homology"/>
<protein>
    <recommendedName>
        <fullName evidence="1">Acetate kinase</fullName>
        <ecNumber evidence="1">2.7.2.1</ecNumber>
    </recommendedName>
    <alternativeName>
        <fullName evidence="1">Acetokinase</fullName>
    </alternativeName>
</protein>
<comment type="function">
    <text evidence="1">Catalyzes the formation of acetyl phosphate from acetate and ATP. Can also catalyze the reverse reaction.</text>
</comment>
<comment type="catalytic activity">
    <reaction evidence="1">
        <text>acetate + ATP = acetyl phosphate + ADP</text>
        <dbReference type="Rhea" id="RHEA:11352"/>
        <dbReference type="ChEBI" id="CHEBI:22191"/>
        <dbReference type="ChEBI" id="CHEBI:30089"/>
        <dbReference type="ChEBI" id="CHEBI:30616"/>
        <dbReference type="ChEBI" id="CHEBI:456216"/>
        <dbReference type="EC" id="2.7.2.1"/>
    </reaction>
</comment>
<comment type="cofactor">
    <cofactor evidence="1">
        <name>Mg(2+)</name>
        <dbReference type="ChEBI" id="CHEBI:18420"/>
    </cofactor>
    <cofactor evidence="1">
        <name>Mn(2+)</name>
        <dbReference type="ChEBI" id="CHEBI:29035"/>
    </cofactor>
    <text evidence="1">Mg(2+). Can also accept Mn(2+).</text>
</comment>
<comment type="pathway">
    <text evidence="1">Metabolic intermediate biosynthesis; acetyl-CoA biosynthesis; acetyl-CoA from acetate: step 1/2.</text>
</comment>
<comment type="subunit">
    <text evidence="1">Homodimer.</text>
</comment>
<comment type="subcellular location">
    <subcellularLocation>
        <location evidence="1">Cytoplasm</location>
    </subcellularLocation>
</comment>
<comment type="similarity">
    <text evidence="1">Belongs to the acetokinase family.</text>
</comment>
<sequence>MKILVLNCGSSSVKYQLFDMEDESVLAKGLVERIGIDGSVLTHRPAGKEKLVRETEIPDHKVAIRLCLEALTDPHYGVIKDYSEIGAIGHRIVHGGTFPHSVLVDASTKKAISELEVLAPLHNGPALRGIEACEAILPGTPQVTAFDTAFHQGMPDYAYTYSLPYELCQKHLIRRYGAHGTSHQYVALRAAAIVGKPLEELKVITCHLGNGSSITAIKNAKSYDTSMGFTPLAGLTMGTRCGDIDPAIVPFLMEKEGYTPAEMDQVMNRRSGVLGVSGLSSDFRDIEAAMAEGNDRARLAWEVFVHSAKKYIGAYAALLNGLDILVFTAGLGENSIAAREAICRDMDYLGIKIDPEKNQVRGQEREITAAGARVRTFVIPTNEELMIARDTLALVQA</sequence>
<reference key="1">
    <citation type="journal article" date="2008" name="Environ. Microbiol.">
        <title>The complete genome sequence of Moorella thermoacetica (f. Clostridium thermoaceticum).</title>
        <authorList>
            <person name="Pierce E."/>
            <person name="Xie G."/>
            <person name="Barabote R.D."/>
            <person name="Saunders E."/>
            <person name="Han C.S."/>
            <person name="Detter J.C."/>
            <person name="Richardson P."/>
            <person name="Brettin T.S."/>
            <person name="Das A."/>
            <person name="Ljungdahl L.G."/>
            <person name="Ragsdale S.W."/>
        </authorList>
    </citation>
    <scope>NUCLEOTIDE SEQUENCE [LARGE SCALE GENOMIC DNA]</scope>
    <source>
        <strain>ATCC 39073 / JCM 9320</strain>
    </source>
</reference>